<gene>
    <name evidence="1" type="primary">coaD</name>
    <name type="ordered locus">CLK_1875</name>
</gene>
<organism>
    <name type="scientific">Clostridium botulinum (strain Loch Maree / Type A3)</name>
    <dbReference type="NCBI Taxonomy" id="498214"/>
    <lineage>
        <taxon>Bacteria</taxon>
        <taxon>Bacillati</taxon>
        <taxon>Bacillota</taxon>
        <taxon>Clostridia</taxon>
        <taxon>Eubacteriales</taxon>
        <taxon>Clostridiaceae</taxon>
        <taxon>Clostridium</taxon>
    </lineage>
</organism>
<feature type="chain" id="PRO_1000096782" description="Phosphopantetheine adenylyltransferase">
    <location>
        <begin position="1"/>
        <end position="164"/>
    </location>
</feature>
<feature type="binding site" evidence="1">
    <location>
        <begin position="9"/>
        <end position="10"/>
    </location>
    <ligand>
        <name>ATP</name>
        <dbReference type="ChEBI" id="CHEBI:30616"/>
    </ligand>
</feature>
<feature type="binding site" evidence="1">
    <location>
        <position position="9"/>
    </location>
    <ligand>
        <name>substrate</name>
    </ligand>
</feature>
<feature type="binding site" evidence="1">
    <location>
        <position position="17"/>
    </location>
    <ligand>
        <name>ATP</name>
        <dbReference type="ChEBI" id="CHEBI:30616"/>
    </ligand>
</feature>
<feature type="binding site" evidence="1">
    <location>
        <position position="41"/>
    </location>
    <ligand>
        <name>substrate</name>
    </ligand>
</feature>
<feature type="binding site" evidence="1">
    <location>
        <position position="73"/>
    </location>
    <ligand>
        <name>substrate</name>
    </ligand>
</feature>
<feature type="binding site" evidence="1">
    <location>
        <position position="87"/>
    </location>
    <ligand>
        <name>substrate</name>
    </ligand>
</feature>
<feature type="binding site" evidence="1">
    <location>
        <begin position="88"/>
        <end position="90"/>
    </location>
    <ligand>
        <name>ATP</name>
        <dbReference type="ChEBI" id="CHEBI:30616"/>
    </ligand>
</feature>
<feature type="binding site" evidence="1">
    <location>
        <position position="98"/>
    </location>
    <ligand>
        <name>ATP</name>
        <dbReference type="ChEBI" id="CHEBI:30616"/>
    </ligand>
</feature>
<feature type="binding site" evidence="1">
    <location>
        <begin position="123"/>
        <end position="129"/>
    </location>
    <ligand>
        <name>ATP</name>
        <dbReference type="ChEBI" id="CHEBI:30616"/>
    </ligand>
</feature>
<feature type="site" description="Transition state stabilizer" evidence="1">
    <location>
        <position position="17"/>
    </location>
</feature>
<comment type="function">
    <text evidence="1">Reversibly transfers an adenylyl group from ATP to 4'-phosphopantetheine, yielding dephospho-CoA (dPCoA) and pyrophosphate.</text>
</comment>
<comment type="catalytic activity">
    <reaction evidence="1">
        <text>(R)-4'-phosphopantetheine + ATP + H(+) = 3'-dephospho-CoA + diphosphate</text>
        <dbReference type="Rhea" id="RHEA:19801"/>
        <dbReference type="ChEBI" id="CHEBI:15378"/>
        <dbReference type="ChEBI" id="CHEBI:30616"/>
        <dbReference type="ChEBI" id="CHEBI:33019"/>
        <dbReference type="ChEBI" id="CHEBI:57328"/>
        <dbReference type="ChEBI" id="CHEBI:61723"/>
        <dbReference type="EC" id="2.7.7.3"/>
    </reaction>
</comment>
<comment type="cofactor">
    <cofactor evidence="1">
        <name>Mg(2+)</name>
        <dbReference type="ChEBI" id="CHEBI:18420"/>
    </cofactor>
</comment>
<comment type="pathway">
    <text evidence="1">Cofactor biosynthesis; coenzyme A biosynthesis; CoA from (R)-pantothenate: step 4/5.</text>
</comment>
<comment type="subunit">
    <text evidence="1">Homohexamer.</text>
</comment>
<comment type="subcellular location">
    <subcellularLocation>
        <location evidence="1">Cytoplasm</location>
    </subcellularLocation>
</comment>
<comment type="similarity">
    <text evidence="1">Belongs to the bacterial CoaD family.</text>
</comment>
<keyword id="KW-0067">ATP-binding</keyword>
<keyword id="KW-0173">Coenzyme A biosynthesis</keyword>
<keyword id="KW-0963">Cytoplasm</keyword>
<keyword id="KW-0460">Magnesium</keyword>
<keyword id="KW-0547">Nucleotide-binding</keyword>
<keyword id="KW-0548">Nucleotidyltransferase</keyword>
<keyword id="KW-0808">Transferase</keyword>
<name>COAD_CLOBM</name>
<reference key="1">
    <citation type="journal article" date="2007" name="PLoS ONE">
        <title>Analysis of the neurotoxin complex genes in Clostridium botulinum A1-A4 and B1 strains: BoNT/A3, /Ba4 and /B1 clusters are located within plasmids.</title>
        <authorList>
            <person name="Smith T.J."/>
            <person name="Hill K.K."/>
            <person name="Foley B.T."/>
            <person name="Detter J.C."/>
            <person name="Munk A.C."/>
            <person name="Bruce D.C."/>
            <person name="Doggett N.A."/>
            <person name="Smith L.A."/>
            <person name="Marks J.D."/>
            <person name="Xie G."/>
            <person name="Brettin T.S."/>
        </authorList>
    </citation>
    <scope>NUCLEOTIDE SEQUENCE [LARGE SCALE GENOMIC DNA]</scope>
    <source>
        <strain>Loch Maree / Type A3</strain>
    </source>
</reference>
<accession>B1KX43</accession>
<proteinExistence type="inferred from homology"/>
<protein>
    <recommendedName>
        <fullName evidence="1">Phosphopantetheine adenylyltransferase</fullName>
        <ecNumber evidence="1">2.7.7.3</ecNumber>
    </recommendedName>
    <alternativeName>
        <fullName evidence="1">Dephospho-CoA pyrophosphorylase</fullName>
    </alternativeName>
    <alternativeName>
        <fullName evidence="1">Pantetheine-phosphate adenylyltransferase</fullName>
        <shortName evidence="1">PPAT</shortName>
    </alternativeName>
</protein>
<sequence length="164" mass="18667">MKTAVYPGSFDPITKGHLNIIKRASKVCDKLIVAVLVNPEKKGLFSVDERVEMIKRVTKNHSNIEVQCFSGLLIDFMKEKKSKVIIKGLRTMSDFEYEFKMALMNNKLDPNIETVFMMTNAKYSYLSSSSVKQVAMFGGCIKDLVPDEIIPDIKKKINHKKECI</sequence>
<evidence type="ECO:0000255" key="1">
    <source>
        <dbReference type="HAMAP-Rule" id="MF_00151"/>
    </source>
</evidence>
<dbReference type="EC" id="2.7.7.3" evidence="1"/>
<dbReference type="EMBL" id="CP000962">
    <property type="protein sequence ID" value="ACA55574.1"/>
    <property type="molecule type" value="Genomic_DNA"/>
</dbReference>
<dbReference type="RefSeq" id="WP_012100414.1">
    <property type="nucleotide sequence ID" value="NC_010520.1"/>
</dbReference>
<dbReference type="SMR" id="B1KX43"/>
<dbReference type="KEGG" id="cbl:CLK_1875"/>
<dbReference type="HOGENOM" id="CLU_100149_0_1_9"/>
<dbReference type="UniPathway" id="UPA00241">
    <property type="reaction ID" value="UER00355"/>
</dbReference>
<dbReference type="GO" id="GO:0005737">
    <property type="term" value="C:cytoplasm"/>
    <property type="evidence" value="ECO:0007669"/>
    <property type="project" value="UniProtKB-SubCell"/>
</dbReference>
<dbReference type="GO" id="GO:0005524">
    <property type="term" value="F:ATP binding"/>
    <property type="evidence" value="ECO:0007669"/>
    <property type="project" value="UniProtKB-KW"/>
</dbReference>
<dbReference type="GO" id="GO:0004595">
    <property type="term" value="F:pantetheine-phosphate adenylyltransferase activity"/>
    <property type="evidence" value="ECO:0007669"/>
    <property type="project" value="UniProtKB-UniRule"/>
</dbReference>
<dbReference type="GO" id="GO:0015937">
    <property type="term" value="P:coenzyme A biosynthetic process"/>
    <property type="evidence" value="ECO:0007669"/>
    <property type="project" value="UniProtKB-UniRule"/>
</dbReference>
<dbReference type="CDD" id="cd02163">
    <property type="entry name" value="PPAT"/>
    <property type="match status" value="1"/>
</dbReference>
<dbReference type="Gene3D" id="3.40.50.620">
    <property type="entry name" value="HUPs"/>
    <property type="match status" value="1"/>
</dbReference>
<dbReference type="HAMAP" id="MF_00151">
    <property type="entry name" value="PPAT_bact"/>
    <property type="match status" value="1"/>
</dbReference>
<dbReference type="InterPro" id="IPR004821">
    <property type="entry name" value="Cyt_trans-like"/>
</dbReference>
<dbReference type="InterPro" id="IPR001980">
    <property type="entry name" value="PPAT"/>
</dbReference>
<dbReference type="InterPro" id="IPR014729">
    <property type="entry name" value="Rossmann-like_a/b/a_fold"/>
</dbReference>
<dbReference type="NCBIfam" id="TIGR01510">
    <property type="entry name" value="coaD_prev_kdtB"/>
    <property type="match status" value="1"/>
</dbReference>
<dbReference type="NCBIfam" id="TIGR00125">
    <property type="entry name" value="cyt_tran_rel"/>
    <property type="match status" value="1"/>
</dbReference>
<dbReference type="PANTHER" id="PTHR21342">
    <property type="entry name" value="PHOSPHOPANTETHEINE ADENYLYLTRANSFERASE"/>
    <property type="match status" value="1"/>
</dbReference>
<dbReference type="PANTHER" id="PTHR21342:SF1">
    <property type="entry name" value="PHOSPHOPANTETHEINE ADENYLYLTRANSFERASE"/>
    <property type="match status" value="1"/>
</dbReference>
<dbReference type="Pfam" id="PF01467">
    <property type="entry name" value="CTP_transf_like"/>
    <property type="match status" value="1"/>
</dbReference>
<dbReference type="PRINTS" id="PR01020">
    <property type="entry name" value="LPSBIOSNTHSS"/>
</dbReference>
<dbReference type="SUPFAM" id="SSF52374">
    <property type="entry name" value="Nucleotidylyl transferase"/>
    <property type="match status" value="1"/>
</dbReference>